<keyword id="KW-0150">Chloroplast</keyword>
<keyword id="KW-0934">Plastid</keyword>
<keyword id="KW-0687">Ribonucleoprotein</keyword>
<keyword id="KW-0689">Ribosomal protein</keyword>
<organism>
    <name type="scientific">Eucalyptus globulus subsp. globulus</name>
    <name type="common">Tasmanian blue gum</name>
    <dbReference type="NCBI Taxonomy" id="71271"/>
    <lineage>
        <taxon>Eukaryota</taxon>
        <taxon>Viridiplantae</taxon>
        <taxon>Streptophyta</taxon>
        <taxon>Embryophyta</taxon>
        <taxon>Tracheophyta</taxon>
        <taxon>Spermatophyta</taxon>
        <taxon>Magnoliopsida</taxon>
        <taxon>eudicotyledons</taxon>
        <taxon>Gunneridae</taxon>
        <taxon>Pentapetalae</taxon>
        <taxon>rosids</taxon>
        <taxon>malvids</taxon>
        <taxon>Myrtales</taxon>
        <taxon>Myrtaceae</taxon>
        <taxon>Myrtoideae</taxon>
        <taxon>Eucalypteae</taxon>
        <taxon>Eucalyptus</taxon>
    </lineage>
</organism>
<evidence type="ECO:0000305" key="1"/>
<gene>
    <name type="primary">rps2</name>
</gene>
<comment type="subcellular location">
    <subcellularLocation>
        <location>Plastid</location>
        <location>Chloroplast</location>
    </subcellularLocation>
</comment>
<comment type="similarity">
    <text evidence="1">Belongs to the universal ribosomal protein uS2 family.</text>
</comment>
<reference key="1">
    <citation type="journal article" date="2005" name="DNA Res.">
        <title>Complete nucleotide sequence of the chloroplast genome from the Tasmanian blue gum, Eucalyptus globulus (Myrtaceae).</title>
        <authorList>
            <person name="Steane D.A."/>
        </authorList>
    </citation>
    <scope>NUCLEOTIDE SEQUENCE [LARGE SCALE GENOMIC DNA]</scope>
</reference>
<dbReference type="EMBL" id="AY780259">
    <property type="protein sequence ID" value="AAX21018.1"/>
    <property type="molecule type" value="Genomic_DNA"/>
</dbReference>
<dbReference type="RefSeq" id="YP_636288.1">
    <property type="nucleotide sequence ID" value="NC_008115.1"/>
</dbReference>
<dbReference type="SMR" id="Q49L09"/>
<dbReference type="GeneID" id="4108481"/>
<dbReference type="GO" id="GO:0009507">
    <property type="term" value="C:chloroplast"/>
    <property type="evidence" value="ECO:0007669"/>
    <property type="project" value="UniProtKB-SubCell"/>
</dbReference>
<dbReference type="GO" id="GO:0005763">
    <property type="term" value="C:mitochondrial small ribosomal subunit"/>
    <property type="evidence" value="ECO:0007669"/>
    <property type="project" value="TreeGrafter"/>
</dbReference>
<dbReference type="GO" id="GO:0003735">
    <property type="term" value="F:structural constituent of ribosome"/>
    <property type="evidence" value="ECO:0007669"/>
    <property type="project" value="InterPro"/>
</dbReference>
<dbReference type="GO" id="GO:0006412">
    <property type="term" value="P:translation"/>
    <property type="evidence" value="ECO:0007669"/>
    <property type="project" value="UniProtKB-UniRule"/>
</dbReference>
<dbReference type="CDD" id="cd01425">
    <property type="entry name" value="RPS2"/>
    <property type="match status" value="1"/>
</dbReference>
<dbReference type="FunFam" id="3.40.50.10490:FF:000101">
    <property type="match status" value="1"/>
</dbReference>
<dbReference type="FunFam" id="1.10.287.610:FF:000001">
    <property type="entry name" value="30S ribosomal protein S2"/>
    <property type="match status" value="1"/>
</dbReference>
<dbReference type="Gene3D" id="3.40.50.10490">
    <property type="entry name" value="Glucose-6-phosphate isomerase like protein, domain 1"/>
    <property type="match status" value="1"/>
</dbReference>
<dbReference type="Gene3D" id="1.10.287.610">
    <property type="entry name" value="Helix hairpin bin"/>
    <property type="match status" value="1"/>
</dbReference>
<dbReference type="HAMAP" id="MF_00291_B">
    <property type="entry name" value="Ribosomal_uS2_B"/>
    <property type="match status" value="1"/>
</dbReference>
<dbReference type="InterPro" id="IPR001865">
    <property type="entry name" value="Ribosomal_uS2"/>
</dbReference>
<dbReference type="InterPro" id="IPR005706">
    <property type="entry name" value="Ribosomal_uS2_bac/mit/plastid"/>
</dbReference>
<dbReference type="InterPro" id="IPR018130">
    <property type="entry name" value="Ribosomal_uS2_CS"/>
</dbReference>
<dbReference type="InterPro" id="IPR023591">
    <property type="entry name" value="Ribosomal_uS2_flav_dom_sf"/>
</dbReference>
<dbReference type="NCBIfam" id="TIGR01011">
    <property type="entry name" value="rpsB_bact"/>
    <property type="match status" value="1"/>
</dbReference>
<dbReference type="PANTHER" id="PTHR12534">
    <property type="entry name" value="30S RIBOSOMAL PROTEIN S2 PROKARYOTIC AND ORGANELLAR"/>
    <property type="match status" value="1"/>
</dbReference>
<dbReference type="PANTHER" id="PTHR12534:SF0">
    <property type="entry name" value="SMALL RIBOSOMAL SUBUNIT PROTEIN US2M"/>
    <property type="match status" value="1"/>
</dbReference>
<dbReference type="Pfam" id="PF00318">
    <property type="entry name" value="Ribosomal_S2"/>
    <property type="match status" value="1"/>
</dbReference>
<dbReference type="PRINTS" id="PR00395">
    <property type="entry name" value="RIBOSOMALS2"/>
</dbReference>
<dbReference type="SUPFAM" id="SSF52313">
    <property type="entry name" value="Ribosomal protein S2"/>
    <property type="match status" value="1"/>
</dbReference>
<dbReference type="PROSITE" id="PS00962">
    <property type="entry name" value="RIBOSOMAL_S2_1"/>
    <property type="match status" value="1"/>
</dbReference>
<dbReference type="PROSITE" id="PS00963">
    <property type="entry name" value="RIBOSOMAL_S2_2"/>
    <property type="match status" value="1"/>
</dbReference>
<feature type="chain" id="PRO_0000352114" description="Small ribosomal subunit protein uS2c">
    <location>
        <begin position="1"/>
        <end position="236"/>
    </location>
</feature>
<protein>
    <recommendedName>
        <fullName evidence="1">Small ribosomal subunit protein uS2c</fullName>
    </recommendedName>
    <alternativeName>
        <fullName>30S ribosomal protein S2, chloroplastic</fullName>
    </alternativeName>
</protein>
<proteinExistence type="inferred from homology"/>
<geneLocation type="chloroplast"/>
<sequence>MTRRYWNINLEEMMEAGVHFGHGTRKWNPRMAPYISAKRKGIHITNLTKTARFLSEACDLVFDAASRGKQFLIVGTKNKAADSVARAAIRARCHYVNKKWLGGMLTNWSTTETRLHKFRDLRTEQKAGRLNRLPKRDAAMLKRQLSHLQTYLGGIKYMTGLPDIVIIVDQQEEYTALRECITLGIPTICLIDTNCDPDLADISIPANDDAIASIRLILNKLVFAICEGRSSYIRNP</sequence>
<name>RR2_EUCGG</name>
<accession>Q49L09</accession>